<accession>Q2SMA7</accession>
<proteinExistence type="inferred from homology"/>
<dbReference type="EC" id="5.4.2.12" evidence="1"/>
<dbReference type="EMBL" id="CP000155">
    <property type="protein sequence ID" value="ABC28217.1"/>
    <property type="molecule type" value="Genomic_DNA"/>
</dbReference>
<dbReference type="RefSeq" id="WP_011395290.1">
    <property type="nucleotide sequence ID" value="NC_007645.1"/>
</dbReference>
<dbReference type="SMR" id="Q2SMA7"/>
<dbReference type="STRING" id="349521.HCH_01352"/>
<dbReference type="KEGG" id="hch:HCH_01352"/>
<dbReference type="eggNOG" id="COG0696">
    <property type="taxonomic scope" value="Bacteria"/>
</dbReference>
<dbReference type="HOGENOM" id="CLU_026099_2_0_6"/>
<dbReference type="OrthoDB" id="9800863at2"/>
<dbReference type="UniPathway" id="UPA00109">
    <property type="reaction ID" value="UER00186"/>
</dbReference>
<dbReference type="Proteomes" id="UP000000238">
    <property type="component" value="Chromosome"/>
</dbReference>
<dbReference type="GO" id="GO:0005829">
    <property type="term" value="C:cytosol"/>
    <property type="evidence" value="ECO:0007669"/>
    <property type="project" value="TreeGrafter"/>
</dbReference>
<dbReference type="GO" id="GO:0030145">
    <property type="term" value="F:manganese ion binding"/>
    <property type="evidence" value="ECO:0007669"/>
    <property type="project" value="UniProtKB-UniRule"/>
</dbReference>
<dbReference type="GO" id="GO:0004619">
    <property type="term" value="F:phosphoglycerate mutase activity"/>
    <property type="evidence" value="ECO:0007669"/>
    <property type="project" value="UniProtKB-EC"/>
</dbReference>
<dbReference type="GO" id="GO:0006007">
    <property type="term" value="P:glucose catabolic process"/>
    <property type="evidence" value="ECO:0007669"/>
    <property type="project" value="InterPro"/>
</dbReference>
<dbReference type="GO" id="GO:0006096">
    <property type="term" value="P:glycolytic process"/>
    <property type="evidence" value="ECO:0007669"/>
    <property type="project" value="UniProtKB-UniRule"/>
</dbReference>
<dbReference type="CDD" id="cd16010">
    <property type="entry name" value="iPGM"/>
    <property type="match status" value="1"/>
</dbReference>
<dbReference type="FunFam" id="3.40.1450.10:FF:000001">
    <property type="entry name" value="2,3-bisphosphoglycerate-independent phosphoglycerate mutase"/>
    <property type="match status" value="1"/>
</dbReference>
<dbReference type="FunFam" id="3.40.720.10:FF:000001">
    <property type="entry name" value="2,3-bisphosphoglycerate-independent phosphoglycerate mutase"/>
    <property type="match status" value="1"/>
</dbReference>
<dbReference type="Gene3D" id="3.40.720.10">
    <property type="entry name" value="Alkaline Phosphatase, subunit A"/>
    <property type="match status" value="1"/>
</dbReference>
<dbReference type="Gene3D" id="3.40.1450.10">
    <property type="entry name" value="BPG-independent phosphoglycerate mutase, domain B"/>
    <property type="match status" value="1"/>
</dbReference>
<dbReference type="HAMAP" id="MF_01038">
    <property type="entry name" value="GpmI"/>
    <property type="match status" value="1"/>
</dbReference>
<dbReference type="InterPro" id="IPR017850">
    <property type="entry name" value="Alkaline_phosphatase_core_sf"/>
</dbReference>
<dbReference type="InterPro" id="IPR011258">
    <property type="entry name" value="BPG-indep_PGM_N"/>
</dbReference>
<dbReference type="InterPro" id="IPR006124">
    <property type="entry name" value="Metalloenzyme"/>
</dbReference>
<dbReference type="InterPro" id="IPR036646">
    <property type="entry name" value="PGAM_B_sf"/>
</dbReference>
<dbReference type="InterPro" id="IPR005995">
    <property type="entry name" value="Pgm_bpd_ind"/>
</dbReference>
<dbReference type="NCBIfam" id="TIGR01307">
    <property type="entry name" value="pgm_bpd_ind"/>
    <property type="match status" value="1"/>
</dbReference>
<dbReference type="PANTHER" id="PTHR31637">
    <property type="entry name" value="2,3-BISPHOSPHOGLYCERATE-INDEPENDENT PHOSPHOGLYCERATE MUTASE"/>
    <property type="match status" value="1"/>
</dbReference>
<dbReference type="PANTHER" id="PTHR31637:SF0">
    <property type="entry name" value="2,3-BISPHOSPHOGLYCERATE-INDEPENDENT PHOSPHOGLYCERATE MUTASE"/>
    <property type="match status" value="1"/>
</dbReference>
<dbReference type="Pfam" id="PF06415">
    <property type="entry name" value="iPGM_N"/>
    <property type="match status" value="1"/>
</dbReference>
<dbReference type="Pfam" id="PF01676">
    <property type="entry name" value="Metalloenzyme"/>
    <property type="match status" value="1"/>
</dbReference>
<dbReference type="PIRSF" id="PIRSF001492">
    <property type="entry name" value="IPGAM"/>
    <property type="match status" value="1"/>
</dbReference>
<dbReference type="SUPFAM" id="SSF64158">
    <property type="entry name" value="2,3-Bisphosphoglycerate-independent phosphoglycerate mutase, substrate-binding domain"/>
    <property type="match status" value="1"/>
</dbReference>
<dbReference type="SUPFAM" id="SSF53649">
    <property type="entry name" value="Alkaline phosphatase-like"/>
    <property type="match status" value="1"/>
</dbReference>
<gene>
    <name evidence="1" type="primary">gpmI</name>
    <name type="ordered locus">HCH_01352</name>
</gene>
<sequence length="514" mass="56261">MTAKRKPTALLILDGWGYREGKDSNAIANANTPFWDQISSQNPHVLIHTSGMAVGLPEGQMGNSEVGHMNLGAGRIVYQNFTRITKDIEDGVFAQNPAISSAIDKAVSNGKAVHLLGLLSPGGVHSHEDHILAACKVARERGADKVFVHAFLDGRDTPPRSAQPSLERTDKLLKELGCGRVASIIGRYYAMDRDNRWDRVQAAYDLLTLGEAPYHAESAVQALTAAYERGEDDEFVKATLIKGSSDNDAVISDGDAVIFMNFRADRARELTRCFVEQDFDGFQRNKLPKLADFVMLTEYSANIHTACAYPATELTNSIGEYMATLHKTQLRIAETEKYAHVTFFFSGGKEALFEGEERILIPSPDVATYDLKPEMSAPEVTDKLVEAIKSGKFDLIVCNYANGDMVGHSGVYDAAMKAAECIDQCLKRIAEALNEVGGQCLITADHGNAEQMVDENGQPHTQHTTGPVPLIYIGPKNISLKEDGRLCDIAPSLLDLMELEKPREMTGESLIVQN</sequence>
<comment type="function">
    <text evidence="1">Catalyzes the interconversion of 2-phosphoglycerate and 3-phosphoglycerate.</text>
</comment>
<comment type="catalytic activity">
    <reaction evidence="1">
        <text>(2R)-2-phosphoglycerate = (2R)-3-phosphoglycerate</text>
        <dbReference type="Rhea" id="RHEA:15901"/>
        <dbReference type="ChEBI" id="CHEBI:58272"/>
        <dbReference type="ChEBI" id="CHEBI:58289"/>
        <dbReference type="EC" id="5.4.2.12"/>
    </reaction>
</comment>
<comment type="cofactor">
    <cofactor evidence="1">
        <name>Mn(2+)</name>
        <dbReference type="ChEBI" id="CHEBI:29035"/>
    </cofactor>
    <text evidence="1">Binds 2 manganese ions per subunit.</text>
</comment>
<comment type="pathway">
    <text evidence="1">Carbohydrate degradation; glycolysis; pyruvate from D-glyceraldehyde 3-phosphate: step 3/5.</text>
</comment>
<comment type="subunit">
    <text evidence="1">Monomer.</text>
</comment>
<comment type="similarity">
    <text evidence="1">Belongs to the BPG-independent phosphoglycerate mutase family.</text>
</comment>
<evidence type="ECO:0000255" key="1">
    <source>
        <dbReference type="HAMAP-Rule" id="MF_01038"/>
    </source>
</evidence>
<feature type="chain" id="PRO_1000063974" description="2,3-bisphosphoglycerate-independent phosphoglycerate mutase">
    <location>
        <begin position="1"/>
        <end position="514"/>
    </location>
</feature>
<feature type="active site" description="Phosphoserine intermediate" evidence="1">
    <location>
        <position position="64"/>
    </location>
</feature>
<feature type="binding site" evidence="1">
    <location>
        <position position="14"/>
    </location>
    <ligand>
        <name>Mn(2+)</name>
        <dbReference type="ChEBI" id="CHEBI:29035"/>
        <label>2</label>
    </ligand>
</feature>
<feature type="binding site" evidence="1">
    <location>
        <position position="64"/>
    </location>
    <ligand>
        <name>Mn(2+)</name>
        <dbReference type="ChEBI" id="CHEBI:29035"/>
        <label>2</label>
    </ligand>
</feature>
<feature type="binding site" evidence="1">
    <location>
        <position position="125"/>
    </location>
    <ligand>
        <name>substrate</name>
    </ligand>
</feature>
<feature type="binding site" evidence="1">
    <location>
        <begin position="155"/>
        <end position="156"/>
    </location>
    <ligand>
        <name>substrate</name>
    </ligand>
</feature>
<feature type="binding site" evidence="1">
    <location>
        <position position="187"/>
    </location>
    <ligand>
        <name>substrate</name>
    </ligand>
</feature>
<feature type="binding site" evidence="1">
    <location>
        <position position="193"/>
    </location>
    <ligand>
        <name>substrate</name>
    </ligand>
</feature>
<feature type="binding site" evidence="1">
    <location>
        <begin position="263"/>
        <end position="266"/>
    </location>
    <ligand>
        <name>substrate</name>
    </ligand>
</feature>
<feature type="binding site" evidence="1">
    <location>
        <position position="337"/>
    </location>
    <ligand>
        <name>substrate</name>
    </ligand>
</feature>
<feature type="binding site" evidence="1">
    <location>
        <position position="404"/>
    </location>
    <ligand>
        <name>Mn(2+)</name>
        <dbReference type="ChEBI" id="CHEBI:29035"/>
        <label>1</label>
    </ligand>
</feature>
<feature type="binding site" evidence="1">
    <location>
        <position position="408"/>
    </location>
    <ligand>
        <name>Mn(2+)</name>
        <dbReference type="ChEBI" id="CHEBI:29035"/>
        <label>1</label>
    </ligand>
</feature>
<feature type="binding site" evidence="1">
    <location>
        <position position="445"/>
    </location>
    <ligand>
        <name>Mn(2+)</name>
        <dbReference type="ChEBI" id="CHEBI:29035"/>
        <label>2</label>
    </ligand>
</feature>
<feature type="binding site" evidence="1">
    <location>
        <position position="446"/>
    </location>
    <ligand>
        <name>Mn(2+)</name>
        <dbReference type="ChEBI" id="CHEBI:29035"/>
        <label>2</label>
    </ligand>
</feature>
<feature type="binding site" evidence="1">
    <location>
        <position position="463"/>
    </location>
    <ligand>
        <name>Mn(2+)</name>
        <dbReference type="ChEBI" id="CHEBI:29035"/>
        <label>1</label>
    </ligand>
</feature>
<organism>
    <name type="scientific">Hahella chejuensis (strain KCTC 2396)</name>
    <dbReference type="NCBI Taxonomy" id="349521"/>
    <lineage>
        <taxon>Bacteria</taxon>
        <taxon>Pseudomonadati</taxon>
        <taxon>Pseudomonadota</taxon>
        <taxon>Gammaproteobacteria</taxon>
        <taxon>Oceanospirillales</taxon>
        <taxon>Hahellaceae</taxon>
        <taxon>Hahella</taxon>
    </lineage>
</organism>
<keyword id="KW-0324">Glycolysis</keyword>
<keyword id="KW-0413">Isomerase</keyword>
<keyword id="KW-0464">Manganese</keyword>
<keyword id="KW-0479">Metal-binding</keyword>
<keyword id="KW-1185">Reference proteome</keyword>
<reference key="1">
    <citation type="journal article" date="2005" name="Nucleic Acids Res.">
        <title>Genomic blueprint of Hahella chejuensis, a marine microbe producing an algicidal agent.</title>
        <authorList>
            <person name="Jeong H."/>
            <person name="Yim J.H."/>
            <person name="Lee C."/>
            <person name="Choi S.-H."/>
            <person name="Park Y.K."/>
            <person name="Yoon S.H."/>
            <person name="Hur C.-G."/>
            <person name="Kang H.-Y."/>
            <person name="Kim D."/>
            <person name="Lee H.H."/>
            <person name="Park K.H."/>
            <person name="Park S.-H."/>
            <person name="Park H.-S."/>
            <person name="Lee H.K."/>
            <person name="Oh T.K."/>
            <person name="Kim J.F."/>
        </authorList>
    </citation>
    <scope>NUCLEOTIDE SEQUENCE [LARGE SCALE GENOMIC DNA]</scope>
    <source>
        <strain>KCTC 2396</strain>
    </source>
</reference>
<protein>
    <recommendedName>
        <fullName evidence="1">2,3-bisphosphoglycerate-independent phosphoglycerate mutase</fullName>
        <shortName evidence="1">BPG-independent PGAM</shortName>
        <shortName evidence="1">Phosphoglyceromutase</shortName>
        <shortName evidence="1">iPGM</shortName>
        <ecNumber evidence="1">5.4.2.12</ecNumber>
    </recommendedName>
</protein>
<name>GPMI_HAHCH</name>